<dbReference type="EMBL" id="AL009051">
    <property type="status" value="NOT_ANNOTATED_CDS"/>
    <property type="molecule type" value="Genomic_DNA"/>
</dbReference>
<dbReference type="EMBL" id="BC007072">
    <property type="status" value="NOT_ANNOTATED_CDS"/>
    <property type="molecule type" value="mRNA"/>
</dbReference>
<dbReference type="SMR" id="Q96IX9"/>
<dbReference type="FunCoup" id="Q96IX9">
    <property type="interactions" value="1"/>
</dbReference>
<dbReference type="IntAct" id="Q96IX9">
    <property type="interactions" value="17"/>
</dbReference>
<dbReference type="GlyGen" id="Q96IX9">
    <property type="glycosylation" value="1 site, 1 O-linked glycan (1 site)"/>
</dbReference>
<dbReference type="BioMuta" id="HGNC:28169"/>
<dbReference type="DMDM" id="74751951"/>
<dbReference type="MassIVE" id="Q96IX9"/>
<dbReference type="AGR" id="HGNC:28169"/>
<dbReference type="GeneCards" id="ANKRD36BP1"/>
<dbReference type="HGNC" id="HGNC:28169">
    <property type="gene designation" value="ANKRD36BP1"/>
</dbReference>
<dbReference type="neXtProt" id="NX_Q96IX9"/>
<dbReference type="InParanoid" id="Q96IX9"/>
<dbReference type="PAN-GO" id="Q96IX9">
    <property type="GO annotations" value="0 GO annotations based on evolutionary models"/>
</dbReference>
<dbReference type="PhylomeDB" id="Q96IX9"/>
<dbReference type="PathwayCommons" id="Q96IX9"/>
<dbReference type="SignaLink" id="Q96IX9"/>
<dbReference type="Pharos" id="Q96IX9">
    <property type="development level" value="Tdark"/>
</dbReference>
<dbReference type="Proteomes" id="UP000005640">
    <property type="component" value="Unplaced"/>
</dbReference>
<dbReference type="RNAct" id="Q96IX9">
    <property type="molecule type" value="protein"/>
</dbReference>
<dbReference type="InterPro" id="IPR050657">
    <property type="entry name" value="Ankyrin_repeat_domain"/>
</dbReference>
<dbReference type="InterPro" id="IPR039497">
    <property type="entry name" value="CC144C-like_CC_dom"/>
</dbReference>
<dbReference type="PANTHER" id="PTHR24147">
    <property type="entry name" value="ANKYRIN REPEAT DOMAIN 36-RELATED"/>
    <property type="match status" value="1"/>
</dbReference>
<dbReference type="PANTHER" id="PTHR24147:SF50">
    <property type="entry name" value="ANKYRIN REPEAT DOMAIN-CONTAINING PROTEIN 36A-RELATED"/>
    <property type="match status" value="1"/>
</dbReference>
<dbReference type="Pfam" id="PF14915">
    <property type="entry name" value="CCDC144C"/>
    <property type="match status" value="1"/>
</dbReference>
<feature type="chain" id="PRO_0000318851" description="Putative ankyrin repeat domain-containing protein 26-like 1">
    <location>
        <begin position="1"/>
        <end position="119"/>
    </location>
</feature>
<feature type="coiled-coil region" evidence="1">
    <location>
        <begin position="15"/>
        <end position="112"/>
    </location>
</feature>
<comment type="interaction">
    <interactant intactId="EBI-744859">
        <id>Q96IX9</id>
    </interactant>
    <interactant intactId="EBI-1181367">
        <id>Q01850</id>
        <label>CDR2</label>
    </interactant>
    <organismsDiffer>false</organismsDiffer>
    <experiments>3</experiments>
</comment>
<comment type="interaction">
    <interactant intactId="EBI-744859">
        <id>Q96IX9</id>
    </interactant>
    <interactant intactId="EBI-1059030">
        <id>O95073</id>
        <label>FSBP</label>
    </interactant>
    <organismsDiffer>false</organismsDiffer>
    <experiments>3</experiments>
</comment>
<comment type="interaction">
    <interactant intactId="EBI-744859">
        <id>Q96IX9</id>
    </interactant>
    <interactant intactId="EBI-618309">
        <id>Q08379</id>
        <label>GOLGA2</label>
    </interactant>
    <organismsDiffer>false</organismsDiffer>
    <experiments>3</experiments>
</comment>
<comment type="interaction">
    <interactant intactId="EBI-744859">
        <id>Q96IX9</id>
    </interactant>
    <interactant intactId="EBI-743290">
        <id>Q96ED9</id>
        <label>HOOK2</label>
    </interactant>
    <organismsDiffer>false</organismsDiffer>
    <experiments>3</experiments>
</comment>
<comment type="interaction">
    <interactant intactId="EBI-744859">
        <id>Q96IX9</id>
    </interactant>
    <interactant intactId="EBI-10171552">
        <id>A1A4E9</id>
        <label>KRT13</label>
    </interactant>
    <organismsDiffer>false</organismsDiffer>
    <experiments>3</experiments>
</comment>
<comment type="interaction">
    <interactant intactId="EBI-744859">
        <id>Q96IX9</id>
    </interactant>
    <interactant intactId="EBI-739566">
        <id>P19012</id>
        <label>KRT15</label>
    </interactant>
    <organismsDiffer>false</organismsDiffer>
    <experiments>4</experiments>
</comment>
<comment type="interaction">
    <interactant intactId="EBI-744859">
        <id>Q96IX9</id>
    </interactant>
    <interactant intactId="EBI-948001">
        <id>Q15323</id>
        <label>KRT31</label>
    </interactant>
    <organismsDiffer>false</organismsDiffer>
    <experiments>3</experiments>
</comment>
<comment type="interaction">
    <interactant intactId="EBI-744859">
        <id>Q96IX9</id>
    </interactant>
    <interactant intactId="EBI-1047263">
        <id>O76015</id>
        <label>KRT38</label>
    </interactant>
    <organismsDiffer>false</organismsDiffer>
    <experiments>3</experiments>
</comment>
<comment type="interaction">
    <interactant intactId="EBI-744859">
        <id>Q96IX9</id>
    </interactant>
    <interactant intactId="EBI-10171697">
        <id>Q6A162</id>
        <label>KRT40</label>
    </interactant>
    <organismsDiffer>false</organismsDiffer>
    <experiments>3</experiments>
</comment>
<comment type="interaction">
    <interactant intactId="EBI-744859">
        <id>Q96IX9</id>
    </interactant>
    <interactant intactId="EBI-10172290">
        <id>P60409</id>
        <label>KRTAP10-7</label>
    </interactant>
    <organismsDiffer>false</organismsDiffer>
    <experiments>3</experiments>
</comment>
<comment type="interaction">
    <interactant intactId="EBI-744859">
        <id>Q96IX9</id>
    </interactant>
    <interactant intactId="EBI-741037">
        <id>Q9BRK4</id>
        <label>LZTS2</label>
    </interactant>
    <organismsDiffer>false</organismsDiffer>
    <experiments>3</experiments>
</comment>
<comment type="interaction">
    <interactant intactId="EBI-744859">
        <id>Q96IX9</id>
    </interactant>
    <interactant intactId="EBI-302345">
        <id>Q8ND90</id>
        <label>PNMA1</label>
    </interactant>
    <organismsDiffer>false</organismsDiffer>
    <experiments>3</experiments>
</comment>
<comment type="interaction">
    <interactant intactId="EBI-744859">
        <id>Q96IX9</id>
    </interactant>
    <interactant intactId="EBI-307486">
        <id>P63208</id>
        <label>SKP1</label>
    </interactant>
    <organismsDiffer>false</organismsDiffer>
    <experiments>3</experiments>
</comment>
<comment type="interaction">
    <interactant intactId="EBI-744859">
        <id>Q96IX9</id>
    </interactant>
    <interactant intactId="EBI-355744">
        <id>Q12933</id>
        <label>TRAF2</label>
    </interactant>
    <organismsDiffer>false</organismsDiffer>
    <experiments>4</experiments>
</comment>
<comment type="interaction">
    <interactant intactId="EBI-744859">
        <id>Q96IX9</id>
    </interactant>
    <interactant intactId="EBI-740098">
        <id>P36406</id>
        <label>TRIM23</label>
    </interactant>
    <organismsDiffer>false</organismsDiffer>
    <experiments>3</experiments>
</comment>
<comment type="interaction">
    <interactant intactId="EBI-744859">
        <id>Q96IX9</id>
    </interactant>
    <interactant intactId="EBI-739895">
        <id>Q8N6Y0</id>
        <label>USHBP1</label>
    </interactant>
    <organismsDiffer>false</organismsDiffer>
    <experiments>3</experiments>
</comment>
<comment type="caution">
    <text evidence="2">Could be the product of a pseudogene.</text>
</comment>
<protein>
    <recommendedName>
        <fullName>Putative ankyrin repeat domain-containing protein 26-like 1</fullName>
    </recommendedName>
    <alternativeName>
        <fullName>Ankyrin repeat domain-containing protein 36B pseudogene 1</fullName>
    </alternativeName>
</protein>
<keyword id="KW-0175">Coiled coil</keyword>
<keyword id="KW-1185">Reference proteome</keyword>
<proteinExistence type="uncertain"/>
<reference key="1">
    <citation type="journal article" date="2006" name="Nature">
        <title>The DNA sequence and biological annotation of human chromosome 1.</title>
        <authorList>
            <person name="Gregory S.G."/>
            <person name="Barlow K.F."/>
            <person name="McLay K.E."/>
            <person name="Kaul R."/>
            <person name="Swarbreck D."/>
            <person name="Dunham A."/>
            <person name="Scott C.E."/>
            <person name="Howe K.L."/>
            <person name="Woodfine K."/>
            <person name="Spencer C.C.A."/>
            <person name="Jones M.C."/>
            <person name="Gillson C."/>
            <person name="Searle S."/>
            <person name="Zhou Y."/>
            <person name="Kokocinski F."/>
            <person name="McDonald L."/>
            <person name="Evans R."/>
            <person name="Phillips K."/>
            <person name="Atkinson A."/>
            <person name="Cooper R."/>
            <person name="Jones C."/>
            <person name="Hall R.E."/>
            <person name="Andrews T.D."/>
            <person name="Lloyd C."/>
            <person name="Ainscough R."/>
            <person name="Almeida J.P."/>
            <person name="Ambrose K.D."/>
            <person name="Anderson F."/>
            <person name="Andrew R.W."/>
            <person name="Ashwell R.I.S."/>
            <person name="Aubin K."/>
            <person name="Babbage A.K."/>
            <person name="Bagguley C.L."/>
            <person name="Bailey J."/>
            <person name="Beasley H."/>
            <person name="Bethel G."/>
            <person name="Bird C.P."/>
            <person name="Bray-Allen S."/>
            <person name="Brown J.Y."/>
            <person name="Brown A.J."/>
            <person name="Buckley D."/>
            <person name="Burton J."/>
            <person name="Bye J."/>
            <person name="Carder C."/>
            <person name="Chapman J.C."/>
            <person name="Clark S.Y."/>
            <person name="Clarke G."/>
            <person name="Clee C."/>
            <person name="Cobley V."/>
            <person name="Collier R.E."/>
            <person name="Corby N."/>
            <person name="Coville G.J."/>
            <person name="Davies J."/>
            <person name="Deadman R."/>
            <person name="Dunn M."/>
            <person name="Earthrowl M."/>
            <person name="Ellington A.G."/>
            <person name="Errington H."/>
            <person name="Frankish A."/>
            <person name="Frankland J."/>
            <person name="French L."/>
            <person name="Garner P."/>
            <person name="Garnett J."/>
            <person name="Gay L."/>
            <person name="Ghori M.R.J."/>
            <person name="Gibson R."/>
            <person name="Gilby L.M."/>
            <person name="Gillett W."/>
            <person name="Glithero R.J."/>
            <person name="Grafham D.V."/>
            <person name="Griffiths C."/>
            <person name="Griffiths-Jones S."/>
            <person name="Grocock R."/>
            <person name="Hammond S."/>
            <person name="Harrison E.S.I."/>
            <person name="Hart E."/>
            <person name="Haugen E."/>
            <person name="Heath P.D."/>
            <person name="Holmes S."/>
            <person name="Holt K."/>
            <person name="Howden P.J."/>
            <person name="Hunt A.R."/>
            <person name="Hunt S.E."/>
            <person name="Hunter G."/>
            <person name="Isherwood J."/>
            <person name="James R."/>
            <person name="Johnson C."/>
            <person name="Johnson D."/>
            <person name="Joy A."/>
            <person name="Kay M."/>
            <person name="Kershaw J.K."/>
            <person name="Kibukawa M."/>
            <person name="Kimberley A.M."/>
            <person name="King A."/>
            <person name="Knights A.J."/>
            <person name="Lad H."/>
            <person name="Laird G."/>
            <person name="Lawlor S."/>
            <person name="Leongamornlert D.A."/>
            <person name="Lloyd D.M."/>
            <person name="Loveland J."/>
            <person name="Lovell J."/>
            <person name="Lush M.J."/>
            <person name="Lyne R."/>
            <person name="Martin S."/>
            <person name="Mashreghi-Mohammadi M."/>
            <person name="Matthews L."/>
            <person name="Matthews N.S.W."/>
            <person name="McLaren S."/>
            <person name="Milne S."/>
            <person name="Mistry S."/>
            <person name="Moore M.J.F."/>
            <person name="Nickerson T."/>
            <person name="O'Dell C.N."/>
            <person name="Oliver K."/>
            <person name="Palmeiri A."/>
            <person name="Palmer S.A."/>
            <person name="Parker A."/>
            <person name="Patel D."/>
            <person name="Pearce A.V."/>
            <person name="Peck A.I."/>
            <person name="Pelan S."/>
            <person name="Phelps K."/>
            <person name="Phillimore B.J."/>
            <person name="Plumb R."/>
            <person name="Rajan J."/>
            <person name="Raymond C."/>
            <person name="Rouse G."/>
            <person name="Saenphimmachak C."/>
            <person name="Sehra H.K."/>
            <person name="Sheridan E."/>
            <person name="Shownkeen R."/>
            <person name="Sims S."/>
            <person name="Skuce C.D."/>
            <person name="Smith M."/>
            <person name="Steward C."/>
            <person name="Subramanian S."/>
            <person name="Sycamore N."/>
            <person name="Tracey A."/>
            <person name="Tromans A."/>
            <person name="Van Helmond Z."/>
            <person name="Wall M."/>
            <person name="Wallis J.M."/>
            <person name="White S."/>
            <person name="Whitehead S.L."/>
            <person name="Wilkinson J.E."/>
            <person name="Willey D.L."/>
            <person name="Williams H."/>
            <person name="Wilming L."/>
            <person name="Wray P.W."/>
            <person name="Wu Z."/>
            <person name="Coulson A."/>
            <person name="Vaudin M."/>
            <person name="Sulston J.E."/>
            <person name="Durbin R.M."/>
            <person name="Hubbard T."/>
            <person name="Wooster R."/>
            <person name="Dunham I."/>
            <person name="Carter N.P."/>
            <person name="McVean G."/>
            <person name="Ross M.T."/>
            <person name="Harrow J."/>
            <person name="Olson M.V."/>
            <person name="Beck S."/>
            <person name="Rogers J."/>
            <person name="Bentley D.R."/>
        </authorList>
    </citation>
    <scope>NUCLEOTIDE SEQUENCE [LARGE SCALE GENOMIC DNA]</scope>
</reference>
<reference key="2">
    <citation type="journal article" date="2004" name="Genome Res.">
        <title>The status, quality, and expansion of the NIH full-length cDNA project: the Mammalian Gene Collection (MGC).</title>
        <authorList>
            <consortium name="The MGC Project Team"/>
        </authorList>
    </citation>
    <scope>NUCLEOTIDE SEQUENCE [LARGE SCALE MRNA]</scope>
    <source>
        <tissue>Bone marrow</tissue>
    </source>
</reference>
<gene>
    <name type="primary">ANKRD36BP1</name>
    <name type="synonym">ANKRD26L1</name>
</gene>
<name>A26L1_HUMAN</name>
<accession>Q96IX9</accession>
<organism>
    <name type="scientific">Homo sapiens</name>
    <name type="common">Human</name>
    <dbReference type="NCBI Taxonomy" id="9606"/>
    <lineage>
        <taxon>Eukaryota</taxon>
        <taxon>Metazoa</taxon>
        <taxon>Chordata</taxon>
        <taxon>Craniata</taxon>
        <taxon>Vertebrata</taxon>
        <taxon>Euteleostomi</taxon>
        <taxon>Mammalia</taxon>
        <taxon>Eutheria</taxon>
        <taxon>Euarchontoglires</taxon>
        <taxon>Primates</taxon>
        <taxon>Haplorrhini</taxon>
        <taxon>Catarrhini</taxon>
        <taxon>Hominidae</taxon>
        <taxon>Homo</taxon>
    </lineage>
</organism>
<sequence length="119" mass="14172">MGTRTLQFEISDSHEKEEDLLHKNHLMQDEIARLRLEIHTIKNQILEKKYLKDIEIIKRKHEDLQKALKQNGEKSTKTIAHYSGQLTALTDENTMLRSKLEKEKQSRQRLTKWNHTIVD</sequence>
<evidence type="ECO:0000255" key="1"/>
<evidence type="ECO:0000305" key="2"/>